<protein>
    <recommendedName>
        <fullName>STEAP1 protein</fullName>
    </recommendedName>
    <alternativeName>
        <fullName>Six-transmembrane epithelial antigen of prostate 1</fullName>
    </alternativeName>
</protein>
<reference key="1">
    <citation type="journal article" date="1999" name="Proc. Natl. Acad. Sci. U.S.A.">
        <title>STEAP: a prostate-specific cell-surface antigen highly expressed in human prostate tumors.</title>
        <authorList>
            <person name="Hubert R.S."/>
            <person name="Vivanco I."/>
            <person name="Chen E."/>
            <person name="Rastegar S."/>
            <person name="Leong K."/>
            <person name="Mitchell S.C."/>
            <person name="Madraswala R."/>
            <person name="Zhou Y."/>
            <person name="Kuo J."/>
            <person name="Raitano A.B."/>
            <person name="Jakobovits A."/>
            <person name="Saffran D.C."/>
            <person name="Afar D.E.H."/>
        </authorList>
    </citation>
    <scope>NUCLEOTIDE SEQUENCE [MRNA]</scope>
</reference>
<reference key="2">
    <citation type="journal article" date="2003" name="Nature">
        <title>The DNA sequence of human chromosome 7.</title>
        <authorList>
            <person name="Hillier L.W."/>
            <person name="Fulton R.S."/>
            <person name="Fulton L.A."/>
            <person name="Graves T.A."/>
            <person name="Pepin K.H."/>
            <person name="Wagner-McPherson C."/>
            <person name="Layman D."/>
            <person name="Maas J."/>
            <person name="Jaeger S."/>
            <person name="Walker R."/>
            <person name="Wylie K."/>
            <person name="Sekhon M."/>
            <person name="Becker M.C."/>
            <person name="O'Laughlin M.D."/>
            <person name="Schaller M.E."/>
            <person name="Fewell G.A."/>
            <person name="Delehaunty K.D."/>
            <person name="Miner T.L."/>
            <person name="Nash W.E."/>
            <person name="Cordes M."/>
            <person name="Du H."/>
            <person name="Sun H."/>
            <person name="Edwards J."/>
            <person name="Bradshaw-Cordum H."/>
            <person name="Ali J."/>
            <person name="Andrews S."/>
            <person name="Isak A."/>
            <person name="Vanbrunt A."/>
            <person name="Nguyen C."/>
            <person name="Du F."/>
            <person name="Lamar B."/>
            <person name="Courtney L."/>
            <person name="Kalicki J."/>
            <person name="Ozersky P."/>
            <person name="Bielicki L."/>
            <person name="Scott K."/>
            <person name="Holmes A."/>
            <person name="Harkins R."/>
            <person name="Harris A."/>
            <person name="Strong C.M."/>
            <person name="Hou S."/>
            <person name="Tomlinson C."/>
            <person name="Dauphin-Kohlberg S."/>
            <person name="Kozlowicz-Reilly A."/>
            <person name="Leonard S."/>
            <person name="Rohlfing T."/>
            <person name="Rock S.M."/>
            <person name="Tin-Wollam A.-M."/>
            <person name="Abbott A."/>
            <person name="Minx P."/>
            <person name="Maupin R."/>
            <person name="Strowmatt C."/>
            <person name="Latreille P."/>
            <person name="Miller N."/>
            <person name="Johnson D."/>
            <person name="Murray J."/>
            <person name="Woessner J.P."/>
            <person name="Wendl M.C."/>
            <person name="Yang S.-P."/>
            <person name="Schultz B.R."/>
            <person name="Wallis J.W."/>
            <person name="Spieth J."/>
            <person name="Bieri T.A."/>
            <person name="Nelson J.O."/>
            <person name="Berkowicz N."/>
            <person name="Wohldmann P.E."/>
            <person name="Cook L.L."/>
            <person name="Hickenbotham M.T."/>
            <person name="Eldred J."/>
            <person name="Williams D."/>
            <person name="Bedell J.A."/>
            <person name="Mardis E.R."/>
            <person name="Clifton S.W."/>
            <person name="Chissoe S.L."/>
            <person name="Marra M.A."/>
            <person name="Raymond C."/>
            <person name="Haugen E."/>
            <person name="Gillett W."/>
            <person name="Zhou Y."/>
            <person name="James R."/>
            <person name="Phelps K."/>
            <person name="Iadanoto S."/>
            <person name="Bubb K."/>
            <person name="Simms E."/>
            <person name="Levy R."/>
            <person name="Clendenning J."/>
            <person name="Kaul R."/>
            <person name="Kent W.J."/>
            <person name="Furey T.S."/>
            <person name="Baertsch R.A."/>
            <person name="Brent M.R."/>
            <person name="Keibler E."/>
            <person name="Flicek P."/>
            <person name="Bork P."/>
            <person name="Suyama M."/>
            <person name="Bailey J.A."/>
            <person name="Portnoy M.E."/>
            <person name="Torrents D."/>
            <person name="Chinwalla A.T."/>
            <person name="Gish W.R."/>
            <person name="Eddy S.R."/>
            <person name="McPherson J.D."/>
            <person name="Olson M.V."/>
            <person name="Eichler E.E."/>
            <person name="Green E.D."/>
            <person name="Waterston R.H."/>
            <person name="Wilson R.K."/>
        </authorList>
    </citation>
    <scope>NUCLEOTIDE SEQUENCE [LARGE SCALE GENOMIC DNA]</scope>
</reference>
<reference key="3">
    <citation type="journal article" date="2003" name="Science">
        <title>Human chromosome 7: DNA sequence and biology.</title>
        <authorList>
            <person name="Scherer S.W."/>
            <person name="Cheung J."/>
            <person name="MacDonald J.R."/>
            <person name="Osborne L.R."/>
            <person name="Nakabayashi K."/>
            <person name="Herbrick J.-A."/>
            <person name="Carson A.R."/>
            <person name="Parker-Katiraee L."/>
            <person name="Skaug J."/>
            <person name="Khaja R."/>
            <person name="Zhang J."/>
            <person name="Hudek A.K."/>
            <person name="Li M."/>
            <person name="Haddad M."/>
            <person name="Duggan G.E."/>
            <person name="Fernandez B.A."/>
            <person name="Kanematsu E."/>
            <person name="Gentles S."/>
            <person name="Christopoulos C.C."/>
            <person name="Choufani S."/>
            <person name="Kwasnicka D."/>
            <person name="Zheng X.H."/>
            <person name="Lai Z."/>
            <person name="Nusskern D.R."/>
            <person name="Zhang Q."/>
            <person name="Gu Z."/>
            <person name="Lu F."/>
            <person name="Zeesman S."/>
            <person name="Nowaczyk M.J."/>
            <person name="Teshima I."/>
            <person name="Chitayat D."/>
            <person name="Shuman C."/>
            <person name="Weksberg R."/>
            <person name="Zackai E.H."/>
            <person name="Grebe T.A."/>
            <person name="Cox S.R."/>
            <person name="Kirkpatrick S.J."/>
            <person name="Rahman N."/>
            <person name="Friedman J.M."/>
            <person name="Heng H.H.Q."/>
            <person name="Pelicci P.G."/>
            <person name="Lo-Coco F."/>
            <person name="Belloni E."/>
            <person name="Shaffer L.G."/>
            <person name="Pober B."/>
            <person name="Morton C.C."/>
            <person name="Gusella J.F."/>
            <person name="Bruns G.A.P."/>
            <person name="Korf B.R."/>
            <person name="Quade B.J."/>
            <person name="Ligon A.H."/>
            <person name="Ferguson H."/>
            <person name="Higgins A.W."/>
            <person name="Leach N.T."/>
            <person name="Herrick S.R."/>
            <person name="Lemyre E."/>
            <person name="Farra C.G."/>
            <person name="Kim H.-G."/>
            <person name="Summers A.M."/>
            <person name="Gripp K.W."/>
            <person name="Roberts W."/>
            <person name="Szatmari P."/>
            <person name="Winsor E.J.T."/>
            <person name="Grzeschik K.-H."/>
            <person name="Teebi A."/>
            <person name="Minassian B.A."/>
            <person name="Kere J."/>
            <person name="Armengol L."/>
            <person name="Pujana M.A."/>
            <person name="Estivill X."/>
            <person name="Wilson M.D."/>
            <person name="Koop B.F."/>
            <person name="Tosi S."/>
            <person name="Moore G.E."/>
            <person name="Boright A.P."/>
            <person name="Zlotorynski E."/>
            <person name="Kerem B."/>
            <person name="Kroisel P.M."/>
            <person name="Petek E."/>
            <person name="Oscier D.G."/>
            <person name="Mould S.J."/>
            <person name="Doehner H."/>
            <person name="Doehner K."/>
            <person name="Rommens J.M."/>
            <person name="Vincent J.B."/>
            <person name="Venter J.C."/>
            <person name="Li P.W."/>
            <person name="Mural R.J."/>
            <person name="Adams M.D."/>
            <person name="Tsui L.-C."/>
        </authorList>
    </citation>
    <scope>NUCLEOTIDE SEQUENCE [LARGE SCALE GENOMIC DNA]</scope>
    <scope>VARIANT GLN-47</scope>
</reference>
<reference key="4">
    <citation type="journal article" date="2004" name="Genome Res.">
        <title>The status, quality, and expansion of the NIH full-length cDNA project: the Mammalian Gene Collection (MGC).</title>
        <authorList>
            <consortium name="The MGC Project Team"/>
        </authorList>
    </citation>
    <scope>NUCLEOTIDE SEQUENCE [LARGE SCALE MRNA]</scope>
    <source>
        <tissue>Skin</tissue>
    </source>
</reference>
<reference key="5">
    <citation type="journal article" date="2006" name="Blood">
        <title>The Steap proteins are metalloreductases.</title>
        <authorList>
            <person name="Ohgami R.S."/>
            <person name="Campagna D.R."/>
            <person name="McDonald A."/>
            <person name="Fleming M.D."/>
        </authorList>
    </citation>
    <scope>TISSUE SPECIFICITY</scope>
</reference>
<reference evidence="9" key="6">
    <citation type="journal article" date="2020" name="J. Biol. Chem.">
        <title>Cryo-electron microscopy structure and potential enzymatic function of human six-transmembrane epithelial antigen of the prostate 1 (STEAP1).</title>
        <authorList>
            <person name="Oosterheert W."/>
            <person name="Gros P."/>
        </authorList>
    </citation>
    <scope>STRUCTURE BY ELECTRON MICROSCOPY (2.97 ANGSTROMS) OF 2-339 IN COMPLEX WITH THE FAB FRAGMENT OF ANTIBODY MAB120.545</scope>
    <scope>ABSENCE OF METALLOREDUCTASE ACTIVITY</scope>
    <scope>SUBCELLULAR LOCATION</scope>
    <scope>SUBUNIT</scope>
    <scope>COFACTOR</scope>
    <scope>HEME B-BINDING</scope>
</reference>
<sequence length="339" mass="39851">MESRKDITNQEELWKMKPRRNLEEDDYLHKDTGETSMLKRPVLLHLHQTAHADEFDCPSELQHTQELFPQWHLPIKIAAIIASLTFLYTLLREVIHPLATSHQQYFYKIPILVINKVLPMVSITLLALVYLPGVIAAIVQLHNGTKYKKFPHWLDKWMLTRKQFGLLSFFFAVLHAIYSLSYPMRRSYRYKLLNWAYQQVQQNKEDAWIEHDVWRMEIYVSLGIVGLAILALLAVTSIPSVSDSLTWREFHYIQSKLGIVSLLLGTIHALIFAWNKWIDIKQFVWYTPPTFMIAVFLPIVVLIFKSILFLPCLRKKILKIRHGWEDVTKINKTEICSQL</sequence>
<keyword id="KW-0002">3D-structure</keyword>
<keyword id="KW-1003">Cell membrane</keyword>
<keyword id="KW-0967">Endosome</keyword>
<keyword id="KW-0274">FAD</keyword>
<keyword id="KW-0285">Flavoprotein</keyword>
<keyword id="KW-0349">Heme</keyword>
<keyword id="KW-0408">Iron</keyword>
<keyword id="KW-0472">Membrane</keyword>
<keyword id="KW-0479">Metal-binding</keyword>
<keyword id="KW-1267">Proteomics identification</keyword>
<keyword id="KW-1185">Reference proteome</keyword>
<keyword id="KW-0812">Transmembrane</keyword>
<keyword id="KW-1133">Transmembrane helix</keyword>
<gene>
    <name type="primary">STEAP1</name>
    <name type="synonym">PRSS24</name>
    <name type="synonym">STEAP</name>
</gene>
<proteinExistence type="evidence at protein level"/>
<organism>
    <name type="scientific">Homo sapiens</name>
    <name type="common">Human</name>
    <dbReference type="NCBI Taxonomy" id="9606"/>
    <lineage>
        <taxon>Eukaryota</taxon>
        <taxon>Metazoa</taxon>
        <taxon>Chordata</taxon>
        <taxon>Craniata</taxon>
        <taxon>Vertebrata</taxon>
        <taxon>Euteleostomi</taxon>
        <taxon>Mammalia</taxon>
        <taxon>Eutheria</taxon>
        <taxon>Euarchontoglires</taxon>
        <taxon>Primates</taxon>
        <taxon>Haplorrhini</taxon>
        <taxon>Catarrhini</taxon>
        <taxon>Hominidae</taxon>
        <taxon>Homo</taxon>
    </lineage>
</organism>
<comment type="function">
    <text evidence="6">Does not function as a metalloreductase due to the absence of binding sites for the electron-donating substrate NADPH. Promotes Fe(3+) reduction when fused to the NADPH-binding domain of STEAP4.</text>
</comment>
<comment type="cofactor">
    <cofactor evidence="1">
        <name>FAD</name>
        <dbReference type="ChEBI" id="CHEBI:57692"/>
    </cofactor>
</comment>
<comment type="cofactor">
    <cofactor evidence="6">
        <name>heme b</name>
        <dbReference type="ChEBI" id="CHEBI:60344"/>
    </cofactor>
</comment>
<comment type="subunit">
    <text evidence="6">Homotrimer.</text>
</comment>
<comment type="interaction">
    <interactant intactId="EBI-11747661">
        <id>Q9UHE8</id>
    </interactant>
    <interactant intactId="EBI-12952093">
        <id>Q6NZ63</id>
        <label>STEAP1B</label>
    </interactant>
    <organismsDiffer>false</organismsDiffer>
    <experiments>2</experiments>
</comment>
<comment type="subcellular location">
    <subcellularLocation>
        <location evidence="2">Endosome membrane</location>
        <topology evidence="3">Multi-pass membrane protein</topology>
    </subcellularLocation>
    <subcellularLocation>
        <location evidence="6">Cell membrane</location>
        <topology evidence="3">Multi-pass membrane protein</topology>
    </subcellularLocation>
</comment>
<comment type="tissue specificity">
    <text evidence="5">Ubiquitously expressed. Highly expressed in prostate tumors.</text>
</comment>
<comment type="similarity">
    <text evidence="7">Belongs to the STEAP family.</text>
</comment>
<comment type="online information" name="Atlas of Genetics and Cytogenetics in Oncology and Haematology">
    <link uri="https://atlasgeneticsoncology.org/gene/44482/STEAP1"/>
</comment>
<accession>Q9UHE8</accession>
<accession>A4D1E0</accession>
<accession>O95034</accession>
<evidence type="ECO:0000250" key="1">
    <source>
        <dbReference type="UniProtKB" id="Q687X5"/>
    </source>
</evidence>
<evidence type="ECO:0000250" key="2">
    <source>
        <dbReference type="UniProtKB" id="Q9CWR7"/>
    </source>
</evidence>
<evidence type="ECO:0000255" key="3"/>
<evidence type="ECO:0000269" key="4">
    <source>
    </source>
</evidence>
<evidence type="ECO:0000269" key="5">
    <source>
    </source>
</evidence>
<evidence type="ECO:0000269" key="6">
    <source>
    </source>
</evidence>
<evidence type="ECO:0000305" key="7"/>
<evidence type="ECO:0000305" key="8">
    <source>
    </source>
</evidence>
<evidence type="ECO:0007744" key="9">
    <source>
        <dbReference type="PDB" id="6Y9B"/>
    </source>
</evidence>
<evidence type="ECO:0007829" key="10">
    <source>
        <dbReference type="PDB" id="6Y9B"/>
    </source>
</evidence>
<feature type="chain" id="PRO_0000191694" description="STEAP1 protein">
    <location>
        <begin position="1"/>
        <end position="339"/>
    </location>
</feature>
<feature type="transmembrane region" description="Helical" evidence="3">
    <location>
        <begin position="71"/>
        <end position="91"/>
    </location>
</feature>
<feature type="transmembrane region" description="Helical" evidence="3">
    <location>
        <begin position="119"/>
        <end position="139"/>
    </location>
</feature>
<feature type="transmembrane region" description="Helical" evidence="3">
    <location>
        <begin position="164"/>
        <end position="184"/>
    </location>
</feature>
<feature type="transmembrane region" description="Helical" evidence="3">
    <location>
        <begin position="218"/>
        <end position="238"/>
    </location>
</feature>
<feature type="transmembrane region" description="Helical" evidence="3">
    <location>
        <begin position="258"/>
        <end position="278"/>
    </location>
</feature>
<feature type="transmembrane region" description="Helical" evidence="3">
    <location>
        <begin position="291"/>
        <end position="311"/>
    </location>
</feature>
<feature type="domain" description="Ferric oxidoreductase">
    <location>
        <begin position="118"/>
        <end position="265"/>
    </location>
</feature>
<feature type="binding site" evidence="1">
    <location>
        <position position="140"/>
    </location>
    <ligand>
        <name>FAD</name>
        <dbReference type="ChEBI" id="CHEBI:57692"/>
    </ligand>
</feature>
<feature type="binding site" evidence="1">
    <location>
        <position position="161"/>
    </location>
    <ligand>
        <name>FAD</name>
        <dbReference type="ChEBI" id="CHEBI:57692"/>
    </ligand>
</feature>
<feature type="binding site" description="axial binding residue" evidence="8 9">
    <location>
        <position position="175"/>
    </location>
    <ligand>
        <name>heme b</name>
        <dbReference type="ChEBI" id="CHEBI:60344"/>
    </ligand>
    <ligandPart>
        <name>Fe</name>
        <dbReference type="ChEBI" id="CHEBI:18248"/>
    </ligandPart>
</feature>
<feature type="binding site" evidence="1">
    <location>
        <position position="237"/>
    </location>
    <ligand>
        <name>FAD</name>
        <dbReference type="ChEBI" id="CHEBI:57692"/>
    </ligand>
</feature>
<feature type="binding site" evidence="1">
    <location>
        <position position="254"/>
    </location>
    <ligand>
        <name>FAD</name>
        <dbReference type="ChEBI" id="CHEBI:57692"/>
    </ligand>
</feature>
<feature type="binding site" description="axial binding residue" evidence="8 9">
    <location>
        <position position="268"/>
    </location>
    <ligand>
        <name>heme b</name>
        <dbReference type="ChEBI" id="CHEBI:60344"/>
    </ligand>
    <ligandPart>
        <name>Fe</name>
        <dbReference type="ChEBI" id="CHEBI:18248"/>
    </ligandPart>
</feature>
<feature type="sequence variant" id="VAR_053696" description="In dbSNP:rs4015375." evidence="4">
    <original>H</original>
    <variation>Q</variation>
    <location>
        <position position="47"/>
    </location>
</feature>
<feature type="sequence variant" id="VAR_053697" description="In dbSNP:rs2888782.">
    <original>F</original>
    <variation>L</variation>
    <location>
        <position position="169"/>
    </location>
</feature>
<feature type="helix" evidence="10">
    <location>
        <begin position="69"/>
        <end position="71"/>
    </location>
</feature>
<feature type="helix" evidence="10">
    <location>
        <begin position="72"/>
        <end position="93"/>
    </location>
</feature>
<feature type="helix" evidence="10">
    <location>
        <begin position="95"/>
        <end position="99"/>
    </location>
</feature>
<feature type="helix" evidence="10">
    <location>
        <begin position="106"/>
        <end position="108"/>
    </location>
</feature>
<feature type="helix" evidence="10">
    <location>
        <begin position="109"/>
        <end position="113"/>
    </location>
</feature>
<feature type="helix" evidence="10">
    <location>
        <begin position="114"/>
        <end position="143"/>
    </location>
</feature>
<feature type="helix" evidence="10">
    <location>
        <begin position="152"/>
        <end position="159"/>
    </location>
</feature>
<feature type="helix" evidence="10">
    <location>
        <begin position="161"/>
        <end position="180"/>
    </location>
</feature>
<feature type="turn" evidence="10">
    <location>
        <begin position="181"/>
        <end position="184"/>
    </location>
</feature>
<feature type="helix" evidence="10">
    <location>
        <begin position="186"/>
        <end position="201"/>
    </location>
</feature>
<feature type="helix" evidence="10">
    <location>
        <begin position="210"/>
        <end position="235"/>
    </location>
</feature>
<feature type="helix" evidence="10">
    <location>
        <begin position="239"/>
        <end position="242"/>
    </location>
</feature>
<feature type="helix" evidence="10">
    <location>
        <begin position="247"/>
        <end position="272"/>
    </location>
</feature>
<feature type="strand" evidence="10">
    <location>
        <begin position="273"/>
        <end position="275"/>
    </location>
</feature>
<feature type="turn" evidence="10">
    <location>
        <begin position="276"/>
        <end position="278"/>
    </location>
</feature>
<feature type="strand" evidence="10">
    <location>
        <begin position="284"/>
        <end position="286"/>
    </location>
</feature>
<feature type="helix" evidence="10">
    <location>
        <begin position="290"/>
        <end position="294"/>
    </location>
</feature>
<feature type="helix" evidence="10">
    <location>
        <begin position="296"/>
        <end position="309"/>
    </location>
</feature>
<name>STEA1_HUMAN</name>
<dbReference type="EMBL" id="AF186249">
    <property type="protein sequence ID" value="AAF17479.1"/>
    <property type="molecule type" value="mRNA"/>
</dbReference>
<dbReference type="EMBL" id="AC005053">
    <property type="status" value="NOT_ANNOTATED_CDS"/>
    <property type="molecule type" value="Genomic_DNA"/>
</dbReference>
<dbReference type="EMBL" id="AC004969">
    <property type="protein sequence ID" value="AAD15620.2"/>
    <property type="molecule type" value="Genomic_DNA"/>
</dbReference>
<dbReference type="EMBL" id="CH236949">
    <property type="protein sequence ID" value="EAL24167.1"/>
    <property type="molecule type" value="Genomic_DNA"/>
</dbReference>
<dbReference type="EMBL" id="BC011802">
    <property type="protein sequence ID" value="AAH11802.1"/>
    <property type="molecule type" value="mRNA"/>
</dbReference>
<dbReference type="CCDS" id="CCDS5614.1"/>
<dbReference type="RefSeq" id="NP_036581.1">
    <property type="nucleotide sequence ID" value="NM_012449.3"/>
</dbReference>
<dbReference type="PDB" id="6Y9B">
    <property type="method" value="EM"/>
    <property type="resolution" value="2.97 A"/>
    <property type="chains" value="A/B/C=2-339"/>
</dbReference>
<dbReference type="PDB" id="8UCD">
    <property type="method" value="EM"/>
    <property type="resolution" value="3.00 A"/>
    <property type="chains" value="A/B/C=1-339"/>
</dbReference>
<dbReference type="PDBsum" id="6Y9B"/>
<dbReference type="PDBsum" id="8UCD"/>
<dbReference type="EMDB" id="EMD-10735"/>
<dbReference type="EMDB" id="EMD-42124"/>
<dbReference type="SMR" id="Q9UHE8"/>
<dbReference type="BioGRID" id="117921">
    <property type="interactions" value="14"/>
</dbReference>
<dbReference type="FunCoup" id="Q9UHE8">
    <property type="interactions" value="105"/>
</dbReference>
<dbReference type="IntAct" id="Q9UHE8">
    <property type="interactions" value="3"/>
</dbReference>
<dbReference type="STRING" id="9606.ENSP00000297205"/>
<dbReference type="ChEMBL" id="CHEMBL3712956"/>
<dbReference type="TCDB" id="5.B.6.1.4">
    <property type="family name" value="the transmembrane epithelial antigen protein-3 ferric reductase (steap) family"/>
</dbReference>
<dbReference type="iPTMnet" id="Q9UHE8"/>
<dbReference type="PhosphoSitePlus" id="Q9UHE8"/>
<dbReference type="SwissPalm" id="Q9UHE8"/>
<dbReference type="BioMuta" id="STEAP1"/>
<dbReference type="DMDM" id="12643440"/>
<dbReference type="jPOST" id="Q9UHE8"/>
<dbReference type="MassIVE" id="Q9UHE8"/>
<dbReference type="PaxDb" id="9606-ENSP00000297205"/>
<dbReference type="PeptideAtlas" id="Q9UHE8"/>
<dbReference type="ProteomicsDB" id="84335"/>
<dbReference type="Pumba" id="Q9UHE8"/>
<dbReference type="ABCD" id="Q9UHE8">
    <property type="antibodies" value="1 sequenced antibody"/>
</dbReference>
<dbReference type="Antibodypedia" id="4048">
    <property type="antibodies" value="428 antibodies from 36 providers"/>
</dbReference>
<dbReference type="DNASU" id="26872"/>
<dbReference type="Ensembl" id="ENST00000297205.7">
    <property type="protein sequence ID" value="ENSP00000297205.2"/>
    <property type="gene ID" value="ENSG00000164647.9"/>
</dbReference>
<dbReference type="GeneID" id="26872"/>
<dbReference type="KEGG" id="hsa:26872"/>
<dbReference type="MANE-Select" id="ENST00000297205.7">
    <property type="protein sequence ID" value="ENSP00000297205.2"/>
    <property type="RefSeq nucleotide sequence ID" value="NM_012449.3"/>
    <property type="RefSeq protein sequence ID" value="NP_036581.1"/>
</dbReference>
<dbReference type="UCSC" id="uc003ujx.3">
    <property type="organism name" value="human"/>
</dbReference>
<dbReference type="AGR" id="HGNC:11378"/>
<dbReference type="CTD" id="26872"/>
<dbReference type="DisGeNET" id="26872"/>
<dbReference type="GeneCards" id="STEAP1"/>
<dbReference type="HGNC" id="HGNC:11378">
    <property type="gene designation" value="STEAP1"/>
</dbReference>
<dbReference type="HPA" id="ENSG00000164647">
    <property type="expression patterns" value="Tissue enhanced (prostate)"/>
</dbReference>
<dbReference type="MIM" id="604415">
    <property type="type" value="gene"/>
</dbReference>
<dbReference type="neXtProt" id="NX_Q9UHE8"/>
<dbReference type="OpenTargets" id="ENSG00000164647"/>
<dbReference type="PharmGKB" id="PA36193"/>
<dbReference type="VEuPathDB" id="HostDB:ENSG00000164647"/>
<dbReference type="eggNOG" id="ENOG502QWI9">
    <property type="taxonomic scope" value="Eukaryota"/>
</dbReference>
<dbReference type="GeneTree" id="ENSGT00390000008042"/>
<dbReference type="HOGENOM" id="CLU_034618_0_0_1"/>
<dbReference type="InParanoid" id="Q9UHE8"/>
<dbReference type="OMA" id="KQFIWYT"/>
<dbReference type="OrthoDB" id="550646at2759"/>
<dbReference type="PAN-GO" id="Q9UHE8">
    <property type="GO annotations" value="2 GO annotations based on evolutionary models"/>
</dbReference>
<dbReference type="PhylomeDB" id="Q9UHE8"/>
<dbReference type="TreeFam" id="TF332031"/>
<dbReference type="PathwayCommons" id="Q9UHE8"/>
<dbReference type="SignaLink" id="Q9UHE8"/>
<dbReference type="BioGRID-ORCS" id="26872">
    <property type="hits" value="18 hits in 1054 CRISPR screens"/>
</dbReference>
<dbReference type="ChiTaRS" id="STEAP1">
    <property type="organism name" value="human"/>
</dbReference>
<dbReference type="GeneWiki" id="STEAP1"/>
<dbReference type="GenomeRNAi" id="26872"/>
<dbReference type="Pharos" id="Q9UHE8">
    <property type="development level" value="Tbio"/>
</dbReference>
<dbReference type="PRO" id="PR:Q9UHE8"/>
<dbReference type="Proteomes" id="UP000005640">
    <property type="component" value="Chromosome 7"/>
</dbReference>
<dbReference type="RNAct" id="Q9UHE8">
    <property type="molecule type" value="protein"/>
</dbReference>
<dbReference type="Bgee" id="ENSG00000164647">
    <property type="expression patterns" value="Expressed in pericardium and 154 other cell types or tissues"/>
</dbReference>
<dbReference type="ExpressionAtlas" id="Q9UHE8">
    <property type="expression patterns" value="baseline and differential"/>
</dbReference>
<dbReference type="GO" id="GO:0005911">
    <property type="term" value="C:cell-cell junction"/>
    <property type="evidence" value="ECO:0000304"/>
    <property type="project" value="ProtInc"/>
</dbReference>
<dbReference type="GO" id="GO:0005768">
    <property type="term" value="C:endosome"/>
    <property type="evidence" value="ECO:0000318"/>
    <property type="project" value="GO_Central"/>
</dbReference>
<dbReference type="GO" id="GO:0010008">
    <property type="term" value="C:endosome membrane"/>
    <property type="evidence" value="ECO:0007669"/>
    <property type="project" value="UniProtKB-SubCell"/>
</dbReference>
<dbReference type="GO" id="GO:0016020">
    <property type="term" value="C:membrane"/>
    <property type="evidence" value="ECO:0007005"/>
    <property type="project" value="UniProtKB"/>
</dbReference>
<dbReference type="GO" id="GO:0005886">
    <property type="term" value="C:plasma membrane"/>
    <property type="evidence" value="ECO:0000314"/>
    <property type="project" value="UniProtKB"/>
</dbReference>
<dbReference type="GO" id="GO:0020037">
    <property type="term" value="F:heme binding"/>
    <property type="evidence" value="ECO:0000314"/>
    <property type="project" value="UniProtKB"/>
</dbReference>
<dbReference type="GO" id="GO:0046872">
    <property type="term" value="F:metal ion binding"/>
    <property type="evidence" value="ECO:0007669"/>
    <property type="project" value="UniProtKB-KW"/>
</dbReference>
<dbReference type="InterPro" id="IPR013130">
    <property type="entry name" value="Fe3_Rdtase_TM_dom"/>
</dbReference>
<dbReference type="InterPro" id="IPR051267">
    <property type="entry name" value="STEAP_metalloreductase"/>
</dbReference>
<dbReference type="PANTHER" id="PTHR14239">
    <property type="entry name" value="DUDULIN-RELATED"/>
    <property type="match status" value="1"/>
</dbReference>
<dbReference type="PANTHER" id="PTHR14239:SF3">
    <property type="entry name" value="METALLOREDUCTASE STEAP1-RELATED"/>
    <property type="match status" value="1"/>
</dbReference>
<dbReference type="Pfam" id="PF01794">
    <property type="entry name" value="Ferric_reduct"/>
    <property type="match status" value="1"/>
</dbReference>